<evidence type="ECO:0000255" key="1"/>
<evidence type="ECO:0000305" key="2"/>
<proteinExistence type="evidence at transcript level"/>
<dbReference type="EMBL" id="AB168666">
    <property type="protein sequence ID" value="BAE00777.1"/>
    <property type="molecule type" value="mRNA"/>
</dbReference>
<dbReference type="RefSeq" id="NP_001271482.1">
    <property type="nucleotide sequence ID" value="NM_001284553.1"/>
</dbReference>
<dbReference type="STRING" id="9541.ENSMFAP00000035968"/>
<dbReference type="GlyCosmos" id="Q4R7Z5">
    <property type="glycosylation" value="3 sites, No reported glycans"/>
</dbReference>
<dbReference type="Ensembl" id="ENSMFAT00000010209.2">
    <property type="protein sequence ID" value="ENSMFAP00000035968.1"/>
    <property type="gene ID" value="ENSMFAG00000034358.2"/>
</dbReference>
<dbReference type="VEuPathDB" id="HostDB:ENSMFAG00000034358"/>
<dbReference type="eggNOG" id="ENOG502S0YJ">
    <property type="taxonomic scope" value="Eukaryota"/>
</dbReference>
<dbReference type="GeneTree" id="ENSGT00530000063991"/>
<dbReference type="OMA" id="EACHVQC"/>
<dbReference type="Proteomes" id="UP000233100">
    <property type="component" value="Chromosome 19"/>
</dbReference>
<dbReference type="Bgee" id="ENSMFAG00000034358">
    <property type="expression patterns" value="Expressed in lymph node and 1 other cell type or tissue"/>
</dbReference>
<dbReference type="GO" id="GO:0016020">
    <property type="term" value="C:membrane"/>
    <property type="evidence" value="ECO:0007669"/>
    <property type="project" value="UniProtKB-SubCell"/>
</dbReference>
<dbReference type="Gene3D" id="2.60.40.10">
    <property type="entry name" value="Immunoglobulins"/>
    <property type="match status" value="1"/>
</dbReference>
<dbReference type="InterPro" id="IPR039311">
    <property type="entry name" value="FAM187A/B"/>
</dbReference>
<dbReference type="InterPro" id="IPR036179">
    <property type="entry name" value="Ig-like_dom_sf"/>
</dbReference>
<dbReference type="InterPro" id="IPR013783">
    <property type="entry name" value="Ig-like_fold"/>
</dbReference>
<dbReference type="PANTHER" id="PTHR32178">
    <property type="entry name" value="FAM187"/>
    <property type="match status" value="1"/>
</dbReference>
<dbReference type="PANTHER" id="PTHR32178:SF8">
    <property type="entry name" value="PROTEIN FAM187B"/>
    <property type="match status" value="1"/>
</dbReference>
<dbReference type="SUPFAM" id="SSF48726">
    <property type="entry name" value="Immunoglobulin"/>
    <property type="match status" value="1"/>
</dbReference>
<reference key="1">
    <citation type="submission" date="2005-06" db="EMBL/GenBank/DDBJ databases">
        <title>DNA sequences of macaque genes expressed in brain or testis and its evolutionary implications.</title>
        <authorList>
            <consortium name="International consortium for macaque cDNA sequencing and analysis"/>
        </authorList>
    </citation>
    <scope>NUCLEOTIDE SEQUENCE [LARGE SCALE MRNA]</scope>
    <source>
        <tissue>Testis</tissue>
    </source>
</reference>
<sequence length="369" mass="42377">MPPMLWLLLNFAAPALGFYFSISCPSGKQCQQALLSGNDILLYCNSSGAHWYYLFTQGKKGRLASLTNISNMEIMPEGSLLIKDPSPSQTGLYHCWNKNGRQVVQYEIDFQDISTLHVTHKDLGQRPLQNETLPLGSKELIFTRWEPWQDCNRCKEPGERKRLGYCYIEEPLKEAMPCWLYLGEMLVWSSRLRPELQVEACHVRCTNNTQLRVDYVIFDNFRLDEETEFVWLDCPLGSMYRPVYWHANDTPLTWESQLSGRDFTTFLDPSTGGRQLQVFQPAIYKCFVQQELVAQFNPATSPETLEAQWRENDAQWREARKALPGRADSVLKGLKLVLLVGTVLVLLGALLKFIRPSPGKRSKQVLMVK</sequence>
<protein>
    <recommendedName>
        <fullName>Protein FAM187B</fullName>
    </recommendedName>
    <alternativeName>
        <fullName>Transmembrane protein 162</fullName>
    </alternativeName>
</protein>
<name>F187B_MACFA</name>
<accession>Q4R7Z5</accession>
<gene>
    <name type="primary">FAM187B</name>
    <name type="synonym">TMEM162</name>
    <name type="ORF">QtsA-14008</name>
</gene>
<organism>
    <name type="scientific">Macaca fascicularis</name>
    <name type="common">Crab-eating macaque</name>
    <name type="synonym">Cynomolgus monkey</name>
    <dbReference type="NCBI Taxonomy" id="9541"/>
    <lineage>
        <taxon>Eukaryota</taxon>
        <taxon>Metazoa</taxon>
        <taxon>Chordata</taxon>
        <taxon>Craniata</taxon>
        <taxon>Vertebrata</taxon>
        <taxon>Euteleostomi</taxon>
        <taxon>Mammalia</taxon>
        <taxon>Eutheria</taxon>
        <taxon>Euarchontoglires</taxon>
        <taxon>Primates</taxon>
        <taxon>Haplorrhini</taxon>
        <taxon>Catarrhini</taxon>
        <taxon>Cercopithecidae</taxon>
        <taxon>Cercopithecinae</taxon>
        <taxon>Macaca</taxon>
    </lineage>
</organism>
<comment type="subcellular location">
    <subcellularLocation>
        <location evidence="2">Membrane</location>
        <topology evidence="2">Single-pass type I membrane protein</topology>
    </subcellularLocation>
</comment>
<comment type="similarity">
    <text evidence="2">Belongs to the FAM187 family.</text>
</comment>
<keyword id="KW-0325">Glycoprotein</keyword>
<keyword id="KW-0472">Membrane</keyword>
<keyword id="KW-1185">Reference proteome</keyword>
<keyword id="KW-0732">Signal</keyword>
<keyword id="KW-0812">Transmembrane</keyword>
<keyword id="KW-1133">Transmembrane helix</keyword>
<feature type="signal peptide" evidence="1">
    <location>
        <begin position="1"/>
        <end position="17"/>
    </location>
</feature>
<feature type="chain" id="PRO_0000284627" description="Protein FAM187B">
    <location>
        <begin position="18"/>
        <end position="369"/>
    </location>
</feature>
<feature type="topological domain" description="Extracellular" evidence="1">
    <location>
        <begin position="18"/>
        <end position="333"/>
    </location>
</feature>
<feature type="transmembrane region" description="Helical" evidence="1">
    <location>
        <begin position="334"/>
        <end position="354"/>
    </location>
</feature>
<feature type="topological domain" description="Cytoplasmic" evidence="1">
    <location>
        <begin position="355"/>
        <end position="369"/>
    </location>
</feature>
<feature type="glycosylation site" description="N-linked (GlcNAc...) asparagine" evidence="1">
    <location>
        <position position="45"/>
    </location>
</feature>
<feature type="glycosylation site" description="N-linked (GlcNAc...) asparagine" evidence="1">
    <location>
        <position position="68"/>
    </location>
</feature>
<feature type="glycosylation site" description="N-linked (GlcNAc...) asparagine" evidence="1">
    <location>
        <position position="130"/>
    </location>
</feature>